<dbReference type="EMBL" id="Z82095">
    <property type="protein sequence ID" value="CAB05028.1"/>
    <property type="molecule type" value="Genomic_DNA"/>
</dbReference>
<dbReference type="PIR" id="T28038">
    <property type="entry name" value="T28038"/>
</dbReference>
<dbReference type="RefSeq" id="NP_493478.1">
    <property type="nucleotide sequence ID" value="NM_061077.4"/>
</dbReference>
<dbReference type="SMR" id="O18304"/>
<dbReference type="FunCoup" id="O18304">
    <property type="interactions" value="2"/>
</dbReference>
<dbReference type="STRING" id="6239.ZK849.5.1"/>
<dbReference type="PaxDb" id="6239-ZK849.5"/>
<dbReference type="EnsemblMetazoa" id="ZK849.5.1">
    <property type="protein sequence ID" value="ZK849.5.1"/>
    <property type="gene ID" value="WBGene00014103"/>
</dbReference>
<dbReference type="GeneID" id="173291"/>
<dbReference type="KEGG" id="cel:CELE_ZK849.5"/>
<dbReference type="UCSC" id="ZK849.5">
    <property type="organism name" value="c. elegans"/>
</dbReference>
<dbReference type="AGR" id="WB:WBGene00014103"/>
<dbReference type="CTD" id="173291"/>
<dbReference type="WormBase" id="ZK849.5">
    <property type="protein sequence ID" value="CE16750"/>
    <property type="gene ID" value="WBGene00014103"/>
    <property type="gene designation" value="best-26"/>
</dbReference>
<dbReference type="eggNOG" id="KOG3547">
    <property type="taxonomic scope" value="Eukaryota"/>
</dbReference>
<dbReference type="GeneTree" id="ENSGT00970000195944"/>
<dbReference type="HOGENOM" id="CLU_018069_0_1_1"/>
<dbReference type="InParanoid" id="O18304"/>
<dbReference type="OrthoDB" id="201595at2759"/>
<dbReference type="PhylomeDB" id="O18304"/>
<dbReference type="PRO" id="PR:O18304"/>
<dbReference type="Proteomes" id="UP000001940">
    <property type="component" value="Chromosome I"/>
</dbReference>
<dbReference type="Bgee" id="WBGene00014103">
    <property type="expression patterns" value="Expressed in material anatomical entity and 2 other cell types or tissues"/>
</dbReference>
<dbReference type="GO" id="GO:0034707">
    <property type="term" value="C:chloride channel complex"/>
    <property type="evidence" value="ECO:0007669"/>
    <property type="project" value="UniProtKB-KW"/>
</dbReference>
<dbReference type="GO" id="GO:0005886">
    <property type="term" value="C:plasma membrane"/>
    <property type="evidence" value="ECO:0007669"/>
    <property type="project" value="UniProtKB-SubCell"/>
</dbReference>
<dbReference type="GO" id="GO:0005254">
    <property type="term" value="F:chloride channel activity"/>
    <property type="evidence" value="ECO:0000318"/>
    <property type="project" value="GO_Central"/>
</dbReference>
<dbReference type="InterPro" id="IPR000615">
    <property type="entry name" value="Bestrophin"/>
</dbReference>
<dbReference type="InterPro" id="IPR021134">
    <property type="entry name" value="Bestrophin-like"/>
</dbReference>
<dbReference type="PANTHER" id="PTHR10736">
    <property type="entry name" value="BESTROPHIN"/>
    <property type="match status" value="1"/>
</dbReference>
<dbReference type="PANTHER" id="PTHR10736:SF58">
    <property type="entry name" value="BESTROPHIN HOMOLOG-RELATED"/>
    <property type="match status" value="1"/>
</dbReference>
<dbReference type="Pfam" id="PF01062">
    <property type="entry name" value="Bestrophin"/>
    <property type="match status" value="1"/>
</dbReference>
<evidence type="ECO:0000250" key="1"/>
<evidence type="ECO:0000255" key="2"/>
<evidence type="ECO:0000305" key="3"/>
<accession>O18304</accession>
<protein>
    <recommendedName>
        <fullName>Bestrophin homolog 26</fullName>
    </recommendedName>
</protein>
<gene>
    <name type="primary">best-26</name>
    <name type="ORF">ZK849.5</name>
</gene>
<reference key="1">
    <citation type="journal article" date="1998" name="Science">
        <title>Genome sequence of the nematode C. elegans: a platform for investigating biology.</title>
        <authorList>
            <consortium name="The C. elegans sequencing consortium"/>
        </authorList>
    </citation>
    <scope>NUCLEOTIDE SEQUENCE [LARGE SCALE GENOMIC DNA]</scope>
    <source>
        <strain>Bristol N2</strain>
    </source>
</reference>
<feature type="chain" id="PRO_0000143137" description="Bestrophin homolog 26">
    <location>
        <begin position="1"/>
        <end position="411"/>
    </location>
</feature>
<feature type="transmembrane region" description="Helical" evidence="2">
    <location>
        <begin position="30"/>
        <end position="50"/>
    </location>
</feature>
<feature type="transmembrane region" description="Helical" evidence="2">
    <location>
        <begin position="73"/>
        <end position="93"/>
    </location>
</feature>
<feature type="transmembrane region" description="Helical" evidence="2">
    <location>
        <begin position="235"/>
        <end position="255"/>
    </location>
</feature>
<feature type="transmembrane region" description="Helical" evidence="2">
    <location>
        <begin position="272"/>
        <end position="292"/>
    </location>
</feature>
<sequence>MTVPYYRDVPTGNALRNFFKIMLKRKGNLFTAIFKELCLFLGLYFLFMVIYRLVLPKSGGQREIRKIVENLLSHQEFTIPLEFLLGFFVSSVVDRWRKSLDSLAYIESCAHAVVIGFPPNSNGSDKNLLIRRTIIRYLVVSQILLYREISLKVRRRFKKLTILGKAKLLNQNEIDKLNKLECKHYDIYFLPISWALSLIEDKIDKENLANEFTILWGQIKEWQTKLSLLRNCDYIPIPLAYPQAVFLAVRCYFAVCVFTRQHLDRYDSKMHTWITFFPVLTTFQYIFMMGWMKVAEILLNPMGEDEDDFELNFIIDNNLKNGLDIVSGLCGNHRKLAEHEIENDCRPYYQTNEQDRKKNRAPPESLKNVEFKSFTMEKASKDSPMVVKSESVCCLRRRFNSSAKKHHDSKV</sequence>
<organism>
    <name type="scientific">Caenorhabditis elegans</name>
    <dbReference type="NCBI Taxonomy" id="6239"/>
    <lineage>
        <taxon>Eukaryota</taxon>
        <taxon>Metazoa</taxon>
        <taxon>Ecdysozoa</taxon>
        <taxon>Nematoda</taxon>
        <taxon>Chromadorea</taxon>
        <taxon>Rhabditida</taxon>
        <taxon>Rhabditina</taxon>
        <taxon>Rhabditomorpha</taxon>
        <taxon>Rhabditoidea</taxon>
        <taxon>Rhabditidae</taxon>
        <taxon>Peloderinae</taxon>
        <taxon>Caenorhabditis</taxon>
    </lineage>
</organism>
<name>BST26_CAEEL</name>
<proteinExistence type="inferred from homology"/>
<keyword id="KW-1003">Cell membrane</keyword>
<keyword id="KW-0868">Chloride</keyword>
<keyword id="KW-0869">Chloride channel</keyword>
<keyword id="KW-0407">Ion channel</keyword>
<keyword id="KW-0406">Ion transport</keyword>
<keyword id="KW-0472">Membrane</keyword>
<keyword id="KW-1185">Reference proteome</keyword>
<keyword id="KW-0812">Transmembrane</keyword>
<keyword id="KW-1133">Transmembrane helix</keyword>
<keyword id="KW-0813">Transport</keyword>
<comment type="function">
    <text evidence="1">Forms chloride channels.</text>
</comment>
<comment type="subunit">
    <text evidence="1">Forms oligomers.</text>
</comment>
<comment type="subcellular location">
    <subcellularLocation>
        <location evidence="1">Cell membrane</location>
        <topology evidence="1">Multi-pass membrane protein</topology>
    </subcellularLocation>
</comment>
<comment type="similarity">
    <text evidence="3">Belongs to the anion channel-forming bestrophin (TC 1.A.46) family. Calcium-sensitive chloride channel subfamily.</text>
</comment>